<name>AZOR_SALTY</name>
<feature type="initiator methionine" description="Removed" evidence="1">
    <location>
        <position position="1"/>
    </location>
</feature>
<feature type="chain" id="PRO_0000166316" description="FMN-dependent NADH:quinone oxidoreductase">
    <location>
        <begin position="2"/>
        <end position="201"/>
    </location>
</feature>
<feature type="binding site" evidence="2 3 4">
    <location>
        <position position="10"/>
    </location>
    <ligand>
        <name>FMN</name>
        <dbReference type="ChEBI" id="CHEBI:58210"/>
    </ligand>
</feature>
<feature type="binding site" evidence="2 3 4">
    <location>
        <begin position="16"/>
        <end position="18"/>
    </location>
    <ligand>
        <name>FMN</name>
        <dbReference type="ChEBI" id="CHEBI:58210"/>
    </ligand>
</feature>
<feature type="binding site" evidence="2 3 4">
    <location>
        <begin position="96"/>
        <end position="99"/>
    </location>
    <ligand>
        <name>FMN</name>
        <dbReference type="ChEBI" id="CHEBI:58210"/>
    </ligand>
</feature>
<feature type="binding site" evidence="3 4">
    <location>
        <begin position="140"/>
        <end position="145"/>
    </location>
    <ligand>
        <name>FMN</name>
        <dbReference type="ChEBI" id="CHEBI:58210"/>
    </ligand>
</feature>
<feature type="strand" evidence="5">
    <location>
        <begin position="3"/>
        <end position="8"/>
    </location>
</feature>
<feature type="helix" evidence="5">
    <location>
        <begin position="13"/>
        <end position="15"/>
    </location>
</feature>
<feature type="helix" evidence="5">
    <location>
        <begin position="17"/>
        <end position="32"/>
    </location>
</feature>
<feature type="strand" evidence="5">
    <location>
        <begin position="37"/>
        <end position="42"/>
    </location>
</feature>
<feature type="turn" evidence="5">
    <location>
        <begin position="43"/>
        <end position="45"/>
    </location>
</feature>
<feature type="helix" evidence="5">
    <location>
        <begin position="53"/>
        <end position="58"/>
    </location>
</feature>
<feature type="helix" evidence="5">
    <location>
        <begin position="68"/>
        <end position="86"/>
    </location>
</feature>
<feature type="strand" evidence="5">
    <location>
        <begin position="88"/>
        <end position="93"/>
    </location>
</feature>
<feature type="helix" evidence="5">
    <location>
        <begin position="103"/>
        <end position="112"/>
    </location>
</feature>
<feature type="turn" evidence="5">
    <location>
        <begin position="115"/>
        <end position="117"/>
    </location>
</feature>
<feature type="strand" evidence="5">
    <location>
        <begin position="118"/>
        <end position="122"/>
    </location>
</feature>
<feature type="strand" evidence="5">
    <location>
        <begin position="125"/>
        <end position="130"/>
    </location>
</feature>
<feature type="strand" evidence="5">
    <location>
        <begin position="134"/>
        <end position="140"/>
    </location>
</feature>
<feature type="helix" evidence="5">
    <location>
        <begin position="153"/>
        <end position="163"/>
    </location>
</feature>
<feature type="strand" evidence="5">
    <location>
        <begin position="169"/>
        <end position="174"/>
    </location>
</feature>
<feature type="helix" evidence="5">
    <location>
        <begin position="177"/>
        <end position="179"/>
    </location>
</feature>
<feature type="helix" evidence="5">
    <location>
        <begin position="181"/>
        <end position="200"/>
    </location>
</feature>
<sequence>MSKVLVLKSSILAGYSQSGQLTDYFIEQWREKHVADEITVRDLAANPVPVLDGELVGAMRPGDAPLTPRQQDALALSDELIAELKAHDVIVIAAPMYNFNIPTQLKNYFDLIARAGITFRYTEKGPEGLVTGKRAVVLSSRGGIHKDTPTDLIAPYLKVFLGFIGITDVNFVFAEGIAYGPEVAAKAQADAKAAIDSVVAA</sequence>
<dbReference type="EC" id="1.6.5.-" evidence="2"/>
<dbReference type="EC" id="1.7.1.17" evidence="2"/>
<dbReference type="EMBL" id="AE006468">
    <property type="protein sequence ID" value="AAL20560.1"/>
    <property type="molecule type" value="Genomic_DNA"/>
</dbReference>
<dbReference type="RefSeq" id="NP_460601.1">
    <property type="nucleotide sequence ID" value="NC_003197.2"/>
</dbReference>
<dbReference type="RefSeq" id="WP_000048924.1">
    <property type="nucleotide sequence ID" value="NC_003197.2"/>
</dbReference>
<dbReference type="PDB" id="1T5B">
    <property type="method" value="X-ray"/>
    <property type="resolution" value="1.40 A"/>
    <property type="chains" value="A/B=1-201"/>
</dbReference>
<dbReference type="PDBsum" id="1T5B"/>
<dbReference type="SMR" id="P63462"/>
<dbReference type="STRING" id="99287.STM1642"/>
<dbReference type="DrugBank" id="DB03247">
    <property type="generic name" value="Flavin mononucleotide"/>
</dbReference>
<dbReference type="PaxDb" id="99287-STM1642"/>
<dbReference type="DNASU" id="1253160"/>
<dbReference type="GeneID" id="1253160"/>
<dbReference type="KEGG" id="stm:STM1642"/>
<dbReference type="PATRIC" id="fig|99287.12.peg.1734"/>
<dbReference type="HOGENOM" id="CLU_088964_0_0_6"/>
<dbReference type="OMA" id="FIARPRV"/>
<dbReference type="PhylomeDB" id="P63462"/>
<dbReference type="BioCyc" id="SENT99287:STM1642-MONOMER"/>
<dbReference type="EvolutionaryTrace" id="P63462"/>
<dbReference type="Proteomes" id="UP000001014">
    <property type="component" value="Chromosome"/>
</dbReference>
<dbReference type="GO" id="GO:0009055">
    <property type="term" value="F:electron transfer activity"/>
    <property type="evidence" value="ECO:0007669"/>
    <property type="project" value="UniProtKB-UniRule"/>
</dbReference>
<dbReference type="GO" id="GO:0010181">
    <property type="term" value="F:FMN binding"/>
    <property type="evidence" value="ECO:0007669"/>
    <property type="project" value="UniProtKB-UniRule"/>
</dbReference>
<dbReference type="GO" id="GO:0016652">
    <property type="term" value="F:oxidoreductase activity, acting on NAD(P)H as acceptor"/>
    <property type="evidence" value="ECO:0007669"/>
    <property type="project" value="UniProtKB-UniRule"/>
</dbReference>
<dbReference type="GO" id="GO:0016655">
    <property type="term" value="F:oxidoreductase activity, acting on NAD(P)H, quinone or similar compound as acceptor"/>
    <property type="evidence" value="ECO:0007669"/>
    <property type="project" value="InterPro"/>
</dbReference>
<dbReference type="FunFam" id="3.40.50.360:FF:000010">
    <property type="entry name" value="FMN-dependent NADH-azoreductase"/>
    <property type="match status" value="1"/>
</dbReference>
<dbReference type="Gene3D" id="3.40.50.360">
    <property type="match status" value="1"/>
</dbReference>
<dbReference type="HAMAP" id="MF_01216">
    <property type="entry name" value="Azoreductase_type1"/>
    <property type="match status" value="1"/>
</dbReference>
<dbReference type="InterPro" id="IPR003680">
    <property type="entry name" value="Flavodoxin_fold"/>
</dbReference>
<dbReference type="InterPro" id="IPR029039">
    <property type="entry name" value="Flavoprotein-like_sf"/>
</dbReference>
<dbReference type="InterPro" id="IPR050104">
    <property type="entry name" value="FMN-dep_NADH:Q_OxRdtase_AzoR1"/>
</dbReference>
<dbReference type="InterPro" id="IPR023048">
    <property type="entry name" value="NADH:quinone_OxRdtase_FMN_depd"/>
</dbReference>
<dbReference type="PANTHER" id="PTHR43741">
    <property type="entry name" value="FMN-DEPENDENT NADH-AZOREDUCTASE 1"/>
    <property type="match status" value="1"/>
</dbReference>
<dbReference type="PANTHER" id="PTHR43741:SF2">
    <property type="entry name" value="FMN-DEPENDENT NADH:QUINONE OXIDOREDUCTASE"/>
    <property type="match status" value="1"/>
</dbReference>
<dbReference type="Pfam" id="PF02525">
    <property type="entry name" value="Flavodoxin_2"/>
    <property type="match status" value="1"/>
</dbReference>
<dbReference type="SUPFAM" id="SSF52218">
    <property type="entry name" value="Flavoproteins"/>
    <property type="match status" value="1"/>
</dbReference>
<gene>
    <name evidence="2" type="primary">azoR</name>
    <name type="synonym">acpD</name>
    <name type="ordered locus">STM1642</name>
</gene>
<reference key="1">
    <citation type="journal article" date="2001" name="Nature">
        <title>Complete genome sequence of Salmonella enterica serovar Typhimurium LT2.</title>
        <authorList>
            <person name="McClelland M."/>
            <person name="Sanderson K.E."/>
            <person name="Spieth J."/>
            <person name="Clifton S.W."/>
            <person name="Latreille P."/>
            <person name="Courtney L."/>
            <person name="Porwollik S."/>
            <person name="Ali J."/>
            <person name="Dante M."/>
            <person name="Du F."/>
            <person name="Hou S."/>
            <person name="Layman D."/>
            <person name="Leonard S."/>
            <person name="Nguyen C."/>
            <person name="Scott K."/>
            <person name="Holmes A."/>
            <person name="Grewal N."/>
            <person name="Mulvaney E."/>
            <person name="Ryan E."/>
            <person name="Sun H."/>
            <person name="Florea L."/>
            <person name="Miller W."/>
            <person name="Stoneking T."/>
            <person name="Nhan M."/>
            <person name="Waterston R."/>
            <person name="Wilson R.K."/>
        </authorList>
    </citation>
    <scope>NUCLEOTIDE SEQUENCE [LARGE SCALE GENOMIC DNA]</scope>
    <source>
        <strain>LT2 / SGSC1412 / ATCC 700720</strain>
    </source>
</reference>
<reference evidence="4" key="2">
    <citation type="submission" date="2004-05" db="PDB data bank">
        <title>1.4 A crystal structure of a protein from Salmonella typhimurium similar to E. coli acyl carrier protein phosphodiesterase.</title>
        <authorList>
            <person name="Zhang R."/>
            <person name="Wu R."/>
            <person name="Collart F."/>
            <person name="Joachimiak A."/>
        </authorList>
    </citation>
    <scope>X-RAY CRYSTALLOGRAPHY (1.40 ANGSTROMS) IN COMPLEX WITH FMN</scope>
</reference>
<keyword id="KW-0002">3D-structure</keyword>
<keyword id="KW-0285">Flavoprotein</keyword>
<keyword id="KW-0288">FMN</keyword>
<keyword id="KW-0520">NAD</keyword>
<keyword id="KW-0560">Oxidoreductase</keyword>
<keyword id="KW-1185">Reference proteome</keyword>
<accession>P63462</accession>
<accession>Q8XFP4</accession>
<organism>
    <name type="scientific">Salmonella typhimurium (strain LT2 / SGSC1412 / ATCC 700720)</name>
    <dbReference type="NCBI Taxonomy" id="99287"/>
    <lineage>
        <taxon>Bacteria</taxon>
        <taxon>Pseudomonadati</taxon>
        <taxon>Pseudomonadota</taxon>
        <taxon>Gammaproteobacteria</taxon>
        <taxon>Enterobacterales</taxon>
        <taxon>Enterobacteriaceae</taxon>
        <taxon>Salmonella</taxon>
    </lineage>
</organism>
<proteinExistence type="evidence at protein level"/>
<comment type="function">
    <text evidence="2">Quinone reductase that provides resistance to thiol-specific stress caused by electrophilic quinones.</text>
</comment>
<comment type="function">
    <text evidence="2">Also exhibits azoreductase activity. Catalyzes the reductive cleavage of the azo bond in aromatic azo compounds to the corresponding amines.</text>
</comment>
<comment type="catalytic activity">
    <reaction evidence="2">
        <text>2 a quinone + NADH + H(+) = 2 a 1,4-benzosemiquinone + NAD(+)</text>
        <dbReference type="Rhea" id="RHEA:65952"/>
        <dbReference type="ChEBI" id="CHEBI:15378"/>
        <dbReference type="ChEBI" id="CHEBI:57540"/>
        <dbReference type="ChEBI" id="CHEBI:57945"/>
        <dbReference type="ChEBI" id="CHEBI:132124"/>
        <dbReference type="ChEBI" id="CHEBI:134225"/>
    </reaction>
</comment>
<comment type="catalytic activity">
    <reaction evidence="2">
        <text>N,N-dimethyl-1,4-phenylenediamine + anthranilate + 2 NAD(+) = 2-(4-dimethylaminophenyl)diazenylbenzoate + 2 NADH + 2 H(+)</text>
        <dbReference type="Rhea" id="RHEA:55872"/>
        <dbReference type="ChEBI" id="CHEBI:15378"/>
        <dbReference type="ChEBI" id="CHEBI:15783"/>
        <dbReference type="ChEBI" id="CHEBI:16567"/>
        <dbReference type="ChEBI" id="CHEBI:57540"/>
        <dbReference type="ChEBI" id="CHEBI:57945"/>
        <dbReference type="ChEBI" id="CHEBI:71579"/>
        <dbReference type="EC" id="1.7.1.17"/>
    </reaction>
</comment>
<comment type="cofactor">
    <cofactor evidence="2">
        <name>FMN</name>
        <dbReference type="ChEBI" id="CHEBI:58210"/>
    </cofactor>
    <text evidence="2">Binds 1 FMN per subunit.</text>
</comment>
<comment type="subunit">
    <text evidence="2">Homodimer.</text>
</comment>
<comment type="similarity">
    <text evidence="2">Belongs to the azoreductase type 1 family.</text>
</comment>
<evidence type="ECO:0000250" key="1"/>
<evidence type="ECO:0000255" key="2">
    <source>
        <dbReference type="HAMAP-Rule" id="MF_01216"/>
    </source>
</evidence>
<evidence type="ECO:0000269" key="3">
    <source ref="2"/>
</evidence>
<evidence type="ECO:0007744" key="4">
    <source>
        <dbReference type="PDB" id="1T5B"/>
    </source>
</evidence>
<evidence type="ECO:0007829" key="5">
    <source>
        <dbReference type="PDB" id="1T5B"/>
    </source>
</evidence>
<protein>
    <recommendedName>
        <fullName evidence="2">FMN-dependent NADH:quinone oxidoreductase</fullName>
        <ecNumber evidence="2">1.6.5.-</ecNumber>
    </recommendedName>
    <alternativeName>
        <fullName evidence="2">Azo-dye reductase</fullName>
    </alternativeName>
    <alternativeName>
        <fullName evidence="2">FMN-dependent NADH-azo compound oxidoreductase</fullName>
    </alternativeName>
    <alternativeName>
        <fullName evidence="2">FMN-dependent NADH-azoreductase</fullName>
        <ecNumber evidence="2">1.7.1.17</ecNumber>
    </alternativeName>
</protein>